<keyword id="KW-0235">DNA replication</keyword>
<keyword id="KW-0614">Plasmid</keyword>
<accession>P0A0C9</accession>
<accession>P13969</accession>
<reference key="1">
    <citation type="submission" date="1997-10" db="EMBL/GenBank/DDBJ databases">
        <authorList>
            <person name="Somkuti G.A."/>
            <person name="Solaiman D.K.Y."/>
            <person name="Steinberg D.H."/>
        </authorList>
    </citation>
    <scope>NUCLEOTIDE SEQUENCE [GENOMIC DNA]</scope>
    <source>
        <strain>13044</strain>
    </source>
</reference>
<protein>
    <recommendedName>
        <fullName>Replication and maintenance protein</fullName>
    </recommendedName>
    <alternativeName>
        <fullName>Plasmid replication protein</fullName>
    </alternativeName>
</protein>
<geneLocation type="plasmid">
    <name>pPV142</name>
</geneLocation>
<dbReference type="EMBL" id="AF019140">
    <property type="protein sequence ID" value="AAC33147.1"/>
    <property type="molecule type" value="Genomic_DNA"/>
</dbReference>
<dbReference type="RefSeq" id="WP_000664727.1">
    <property type="nucleotide sequence ID" value="NZ_LJSL01000032.1"/>
</dbReference>
<dbReference type="SMR" id="P0A0C9"/>
<dbReference type="GO" id="GO:0003677">
    <property type="term" value="F:DNA binding"/>
    <property type="evidence" value="ECO:0007669"/>
    <property type="project" value="InterPro"/>
</dbReference>
<dbReference type="GO" id="GO:0006260">
    <property type="term" value="P:DNA replication"/>
    <property type="evidence" value="ECO:0007669"/>
    <property type="project" value="UniProtKB-KW"/>
</dbReference>
<dbReference type="GO" id="GO:0006276">
    <property type="term" value="P:plasmid maintenance"/>
    <property type="evidence" value="ECO:0007669"/>
    <property type="project" value="InterPro"/>
</dbReference>
<dbReference type="GO" id="GO:0006355">
    <property type="term" value="P:regulation of DNA-templated transcription"/>
    <property type="evidence" value="ECO:0007669"/>
    <property type="project" value="InterPro"/>
</dbReference>
<dbReference type="CDD" id="cd00092">
    <property type="entry name" value="HTH_CRP"/>
    <property type="match status" value="1"/>
</dbReference>
<dbReference type="Gene3D" id="1.10.10.10">
    <property type="entry name" value="Winged helix-like DNA-binding domain superfamily/Winged helix DNA-binding domain"/>
    <property type="match status" value="1"/>
</dbReference>
<dbReference type="InterPro" id="IPR012318">
    <property type="entry name" value="HTH_CRP"/>
</dbReference>
<dbReference type="InterPro" id="IPR008813">
    <property type="entry name" value="Plasmid_replication_RepL"/>
</dbReference>
<dbReference type="InterPro" id="IPR036388">
    <property type="entry name" value="WH-like_DNA-bd_sf"/>
</dbReference>
<dbReference type="InterPro" id="IPR036390">
    <property type="entry name" value="WH_DNA-bd_sf"/>
</dbReference>
<dbReference type="Pfam" id="PF05732">
    <property type="entry name" value="RepL"/>
    <property type="match status" value="1"/>
</dbReference>
<dbReference type="SMART" id="SM00419">
    <property type="entry name" value="HTH_CRP"/>
    <property type="match status" value="1"/>
</dbReference>
<dbReference type="SUPFAM" id="SSF46785">
    <property type="entry name" value="Winged helix' DNA-binding domain"/>
    <property type="match status" value="1"/>
</dbReference>
<name>REPLM_STASI</name>
<feature type="chain" id="PRO_0000068434" description="Replication and maintenance protein">
    <location>
        <begin position="1"/>
        <end position="158"/>
    </location>
</feature>
<sequence length="158" mass="18079">MKERYGTVYKGSQRLIDEESGEVIEVDKLYRKQTSGNFVKAYIVQLISMLDMIGGKKLKIVNYILDNVHLSNNTMIATTREIAKATGTSLQTVITTLKILEEGNIIKRKTGVLMLNPELLMRGDDQKQKYLLLEFGNFEQEANEKQENALSDYYSFKD</sequence>
<organism>
    <name type="scientific">Staphylococcus simulans</name>
    <dbReference type="NCBI Taxonomy" id="1286"/>
    <lineage>
        <taxon>Bacteria</taxon>
        <taxon>Bacillati</taxon>
        <taxon>Bacillota</taxon>
        <taxon>Bacilli</taxon>
        <taxon>Bacillales</taxon>
        <taxon>Staphylococcaceae</taxon>
        <taxon>Staphylococcus</taxon>
    </lineage>
</organism>
<gene>
    <name type="primary">repL</name>
    <name type="synonym">rep</name>
</gene>
<proteinExistence type="predicted"/>